<protein>
    <recommendedName>
        <fullName evidence="3">Shugoshin-1</fullName>
    </recommendedName>
    <alternativeName>
        <fullName evidence="3">ZmSGO1</fullName>
    </alternativeName>
</protein>
<name>SGO1_MAIZE</name>
<evidence type="ECO:0000256" key="1">
    <source>
        <dbReference type="SAM" id="MobiDB-lite"/>
    </source>
</evidence>
<evidence type="ECO:0000269" key="2">
    <source>
    </source>
</evidence>
<evidence type="ECO:0000303" key="3">
    <source>
    </source>
</evidence>
<evidence type="ECO:0000305" key="4"/>
<evidence type="ECO:0000312" key="5">
    <source>
        <dbReference type="EMBL" id="ONM52352.1"/>
    </source>
</evidence>
<sequence length="474" mass="52159">MTSTAAEGAGSGSLNPPHSNPSGDGGPRIRSPPGKGNKPVALADITNTGKPNAARSITVPDLVKENTKLLTLLNEKTKIIDLSRVEIYKLRLALQASKQQNLHLTQTNSQMLAEINTGKDRIKMLQHELSCTTALLKVKDSELDRKKNAGNVQQKGVKSQVLKTKASTVAVEAHHVGDSVTSGVEHHVVESQSAVSSNTVCQEPPQDGKQKRMPQRRRSSRLNQGSCEIRGVSQNTLHENPVVPVAPSTLSLEKQYGQTTGKHMKSLQNECSATVHEVIMASEFEKTEINELPQKTDLKEIPEACSSETEVQSHKIGDKAFNSKQNHLTGSQSSLSFNTVDTPEPPEDNTVKRCSKKRSSIEDVNAKLDTITSEPLRHEEKRKSRRKISARLNSVSSEHTDIVVETEHKDVIVSLAGSTSNVSMEQRTNQEQDGDCFSRKSNENQILGRRSLRRAAEKVVSYKEMPLNVKMRRP</sequence>
<comment type="function">
    <text evidence="2">Plays a central role in chromosome cohesion during meiosis I by preventing premature dissociation of cohesin complex from centromeres after prophase, when most of cohesin complex dissociates from chromosomes arms. Required for maintenance of centromeric cohesion before prophase II and correct segregation of chromatids during meiosis II. Has apparently no function in mitosis.</text>
</comment>
<comment type="subcellular location">
    <subcellularLocation>
        <location evidence="2">Nucleus</location>
    </subcellularLocation>
    <subcellularLocation>
        <location evidence="2">Chromosome</location>
        <location evidence="2">Centromere</location>
    </subcellularLocation>
    <text>Localizes to the centromere during meiosis I. REC8 is required for centromeric localization.</text>
</comment>
<comment type="tissue specificity">
    <text evidence="2">Highly expressed in tissues containing meiocytes. Expressed at much lower level in leaves and pollen-containing flowers.</text>
</comment>
<comment type="similarity">
    <text evidence="4">Belongs to the shugoshin family.</text>
</comment>
<dbReference type="EMBL" id="AY964185">
    <property type="protein sequence ID" value="AAY32925.1"/>
    <property type="molecule type" value="mRNA"/>
</dbReference>
<dbReference type="EMBL" id="CM007650">
    <property type="protein sequence ID" value="ONM52352.1"/>
    <property type="molecule type" value="Genomic_DNA"/>
</dbReference>
<dbReference type="RefSeq" id="NP_001105791.1">
    <property type="nucleotide sequence ID" value="NM_001112321.1"/>
</dbReference>
<dbReference type="SMR" id="Q4QSC8"/>
<dbReference type="FunCoup" id="Q4QSC8">
    <property type="interactions" value="95"/>
</dbReference>
<dbReference type="STRING" id="4577.Q4QSC8"/>
<dbReference type="PaxDb" id="4577-GRMZM2G074082_P01"/>
<dbReference type="EnsemblPlants" id="Zm00001eb303090_T004">
    <property type="protein sequence ID" value="Zm00001eb303090_P004"/>
    <property type="gene ID" value="Zm00001eb303090"/>
</dbReference>
<dbReference type="GeneID" id="606461"/>
<dbReference type="Gramene" id="Zm00001eb303090_T004">
    <property type="protein sequence ID" value="Zm00001eb303090_P004"/>
    <property type="gene ID" value="Zm00001eb303090"/>
</dbReference>
<dbReference type="KEGG" id="zma:606461"/>
<dbReference type="eggNOG" id="ENOG502RYDC">
    <property type="taxonomic scope" value="Eukaryota"/>
</dbReference>
<dbReference type="InParanoid" id="Q4QSC8"/>
<dbReference type="OMA" id="MRIDANK"/>
<dbReference type="OrthoDB" id="770508at2759"/>
<dbReference type="Proteomes" id="UP000007305">
    <property type="component" value="Chromosome 7"/>
</dbReference>
<dbReference type="ExpressionAtlas" id="Q4QSC8">
    <property type="expression patterns" value="baseline and differential"/>
</dbReference>
<dbReference type="GO" id="GO:0000775">
    <property type="term" value="C:chromosome, centromeric region"/>
    <property type="evidence" value="ECO:0000314"/>
    <property type="project" value="UniProtKB"/>
</dbReference>
<dbReference type="GO" id="GO:0005634">
    <property type="term" value="C:nucleus"/>
    <property type="evidence" value="ECO:0000314"/>
    <property type="project" value="UniProtKB"/>
</dbReference>
<dbReference type="GO" id="GO:0051301">
    <property type="term" value="P:cell division"/>
    <property type="evidence" value="ECO:0007669"/>
    <property type="project" value="UniProtKB-KW"/>
</dbReference>
<dbReference type="GO" id="GO:0034090">
    <property type="term" value="P:maintenance of meiotic sister chromatid cohesion"/>
    <property type="evidence" value="ECO:0007669"/>
    <property type="project" value="InterPro"/>
</dbReference>
<dbReference type="GO" id="GO:0045144">
    <property type="term" value="P:meiotic sister chromatid segregation"/>
    <property type="evidence" value="ECO:0000315"/>
    <property type="project" value="UniProtKB"/>
</dbReference>
<dbReference type="InterPro" id="IPR044693">
    <property type="entry name" value="SGO_plant"/>
</dbReference>
<dbReference type="InterPro" id="IPR011515">
    <property type="entry name" value="Shugoshin_C"/>
</dbReference>
<dbReference type="PANTHER" id="PTHR34373">
    <property type="entry name" value="SHUGOSHIN 2"/>
    <property type="match status" value="1"/>
</dbReference>
<dbReference type="PANTHER" id="PTHR34373:SF16">
    <property type="entry name" value="SHUGOSHIN-1"/>
    <property type="match status" value="1"/>
</dbReference>
<dbReference type="Pfam" id="PF07557">
    <property type="entry name" value="Shugoshin_C"/>
    <property type="match status" value="1"/>
</dbReference>
<gene>
    <name evidence="3" type="primary">SGO1</name>
    <name evidence="5" type="ORF">ZEAMMB73_Zm00001d019148</name>
</gene>
<reference key="1">
    <citation type="journal article" date="2005" name="Curr. Biol.">
        <title>A REC8-dependent plant Shugoshin is required for maintenance of centromeric cohesion during meiosis and has no mitotic functions.</title>
        <authorList>
            <person name="Hamant O."/>
            <person name="Golubovskaya I."/>
            <person name="Meeley R."/>
            <person name="Fiume E."/>
            <person name="Timofejeva L."/>
            <person name="Schleiffer A."/>
            <person name="Nasmyth K."/>
            <person name="Cande W.Z."/>
        </authorList>
    </citation>
    <scope>NUCLEOTIDE SEQUENCE [MRNA]</scope>
    <scope>FUNCTION</scope>
    <scope>SUBCELLULAR LOCATION</scope>
    <scope>TISSUE SPECIFICITY</scope>
</reference>
<reference key="2">
    <citation type="journal article" date="2009" name="Science">
        <title>The B73 maize genome: complexity, diversity, and dynamics.</title>
        <authorList>
            <person name="Schnable P.S."/>
            <person name="Ware D."/>
            <person name="Fulton R.S."/>
            <person name="Stein J.C."/>
            <person name="Wei F."/>
            <person name="Pasternak S."/>
            <person name="Liang C."/>
            <person name="Zhang J."/>
            <person name="Fulton L."/>
            <person name="Graves T.A."/>
            <person name="Minx P."/>
            <person name="Reily A.D."/>
            <person name="Courtney L."/>
            <person name="Kruchowski S.S."/>
            <person name="Tomlinson C."/>
            <person name="Strong C."/>
            <person name="Delehaunty K."/>
            <person name="Fronick C."/>
            <person name="Courtney B."/>
            <person name="Rock S.M."/>
            <person name="Belter E."/>
            <person name="Du F."/>
            <person name="Kim K."/>
            <person name="Abbott R.M."/>
            <person name="Cotton M."/>
            <person name="Levy A."/>
            <person name="Marchetto P."/>
            <person name="Ochoa K."/>
            <person name="Jackson S.M."/>
            <person name="Gillam B."/>
            <person name="Chen W."/>
            <person name="Yan L."/>
            <person name="Higginbotham J."/>
            <person name="Cardenas M."/>
            <person name="Waligorski J."/>
            <person name="Applebaum E."/>
            <person name="Phelps L."/>
            <person name="Falcone J."/>
            <person name="Kanchi K."/>
            <person name="Thane T."/>
            <person name="Scimone A."/>
            <person name="Thane N."/>
            <person name="Henke J."/>
            <person name="Wang T."/>
            <person name="Ruppert J."/>
            <person name="Shah N."/>
            <person name="Rotter K."/>
            <person name="Hodges J."/>
            <person name="Ingenthron E."/>
            <person name="Cordes M."/>
            <person name="Kohlberg S."/>
            <person name="Sgro J."/>
            <person name="Delgado B."/>
            <person name="Mead K."/>
            <person name="Chinwalla A."/>
            <person name="Leonard S."/>
            <person name="Crouse K."/>
            <person name="Collura K."/>
            <person name="Kudrna D."/>
            <person name="Currie J."/>
            <person name="He R."/>
            <person name="Angelova A."/>
            <person name="Rajasekar S."/>
            <person name="Mueller T."/>
            <person name="Lomeli R."/>
            <person name="Scara G."/>
            <person name="Ko A."/>
            <person name="Delaney K."/>
            <person name="Wissotski M."/>
            <person name="Lopez G."/>
            <person name="Campos D."/>
            <person name="Braidotti M."/>
            <person name="Ashley E."/>
            <person name="Golser W."/>
            <person name="Kim H."/>
            <person name="Lee S."/>
            <person name="Lin J."/>
            <person name="Dujmic Z."/>
            <person name="Kim W."/>
            <person name="Talag J."/>
            <person name="Zuccolo A."/>
            <person name="Fan C."/>
            <person name="Sebastian A."/>
            <person name="Kramer M."/>
            <person name="Spiegel L."/>
            <person name="Nascimento L."/>
            <person name="Zutavern T."/>
            <person name="Miller B."/>
            <person name="Ambroise C."/>
            <person name="Muller S."/>
            <person name="Spooner W."/>
            <person name="Narechania A."/>
            <person name="Ren L."/>
            <person name="Wei S."/>
            <person name="Kumari S."/>
            <person name="Faga B."/>
            <person name="Levy M.J."/>
            <person name="McMahan L."/>
            <person name="Van Buren P."/>
            <person name="Vaughn M.W."/>
            <person name="Ying K."/>
            <person name="Yeh C.-T."/>
            <person name="Emrich S.J."/>
            <person name="Jia Y."/>
            <person name="Kalyanaraman A."/>
            <person name="Hsia A.-P."/>
            <person name="Barbazuk W.B."/>
            <person name="Baucom R.S."/>
            <person name="Brutnell T.P."/>
            <person name="Carpita N.C."/>
            <person name="Chaparro C."/>
            <person name="Chia J.-M."/>
            <person name="Deragon J.-M."/>
            <person name="Estill J.C."/>
            <person name="Fu Y."/>
            <person name="Jeddeloh J.A."/>
            <person name="Han Y."/>
            <person name="Lee H."/>
            <person name="Li P."/>
            <person name="Lisch D.R."/>
            <person name="Liu S."/>
            <person name="Liu Z."/>
            <person name="Nagel D.H."/>
            <person name="McCann M.C."/>
            <person name="SanMiguel P."/>
            <person name="Myers A.M."/>
            <person name="Nettleton D."/>
            <person name="Nguyen J."/>
            <person name="Penning B.W."/>
            <person name="Ponnala L."/>
            <person name="Schneider K.L."/>
            <person name="Schwartz D.C."/>
            <person name="Sharma A."/>
            <person name="Soderlund C."/>
            <person name="Springer N.M."/>
            <person name="Sun Q."/>
            <person name="Wang H."/>
            <person name="Waterman M."/>
            <person name="Westerman R."/>
            <person name="Wolfgruber T.K."/>
            <person name="Yang L."/>
            <person name="Yu Y."/>
            <person name="Zhang L."/>
            <person name="Zhou S."/>
            <person name="Zhu Q."/>
            <person name="Bennetzen J.L."/>
            <person name="Dawe R.K."/>
            <person name="Jiang J."/>
            <person name="Jiang N."/>
            <person name="Presting G.G."/>
            <person name="Wessler S.R."/>
            <person name="Aluru S."/>
            <person name="Martienssen R.A."/>
            <person name="Clifton S.W."/>
            <person name="McCombie W.R."/>
            <person name="Wing R.A."/>
            <person name="Wilson R.K."/>
        </authorList>
    </citation>
    <scope>NUCLEOTIDE SEQUENCE [LARGE SCALE GENOMIC DNA]</scope>
    <source>
        <strain>cv. B73</strain>
    </source>
</reference>
<feature type="chain" id="PRO_0000055444" description="Shugoshin-1">
    <location>
        <begin position="1"/>
        <end position="474"/>
    </location>
</feature>
<feature type="region of interest" description="Disordered" evidence="1">
    <location>
        <begin position="1"/>
        <end position="53"/>
    </location>
</feature>
<feature type="region of interest" description="Disordered" evidence="1">
    <location>
        <begin position="189"/>
        <end position="226"/>
    </location>
</feature>
<feature type="region of interest" description="Disordered" evidence="1">
    <location>
        <begin position="322"/>
        <end position="356"/>
    </location>
</feature>
<feature type="region of interest" description="Disordered" evidence="1">
    <location>
        <begin position="422"/>
        <end position="442"/>
    </location>
</feature>
<feature type="compositionally biased region" description="Polar residues" evidence="1">
    <location>
        <begin position="12"/>
        <end position="22"/>
    </location>
</feature>
<feature type="compositionally biased region" description="Polar residues" evidence="1">
    <location>
        <begin position="190"/>
        <end position="201"/>
    </location>
</feature>
<feature type="compositionally biased region" description="Basic residues" evidence="1">
    <location>
        <begin position="211"/>
        <end position="220"/>
    </location>
</feature>
<feature type="compositionally biased region" description="Polar residues" evidence="1">
    <location>
        <begin position="322"/>
        <end position="341"/>
    </location>
</feature>
<feature type="compositionally biased region" description="Polar residues" evidence="1">
    <location>
        <begin position="422"/>
        <end position="431"/>
    </location>
</feature>
<feature type="sequence conflict" description="In Ref. 1; AAY32925." ref="1">
    <original>E</original>
    <variation>K</variation>
    <location>
        <position position="380"/>
    </location>
</feature>
<organism>
    <name type="scientific">Zea mays</name>
    <name type="common">Maize</name>
    <dbReference type="NCBI Taxonomy" id="4577"/>
    <lineage>
        <taxon>Eukaryota</taxon>
        <taxon>Viridiplantae</taxon>
        <taxon>Streptophyta</taxon>
        <taxon>Embryophyta</taxon>
        <taxon>Tracheophyta</taxon>
        <taxon>Spermatophyta</taxon>
        <taxon>Magnoliopsida</taxon>
        <taxon>Liliopsida</taxon>
        <taxon>Poales</taxon>
        <taxon>Poaceae</taxon>
        <taxon>PACMAD clade</taxon>
        <taxon>Panicoideae</taxon>
        <taxon>Andropogonodae</taxon>
        <taxon>Andropogoneae</taxon>
        <taxon>Tripsacinae</taxon>
        <taxon>Zea</taxon>
    </lineage>
</organism>
<keyword id="KW-0131">Cell cycle</keyword>
<keyword id="KW-0132">Cell division</keyword>
<keyword id="KW-0137">Centromere</keyword>
<keyword id="KW-0158">Chromosome</keyword>
<keyword id="KW-0159">Chromosome partition</keyword>
<keyword id="KW-0469">Meiosis</keyword>
<keyword id="KW-0539">Nucleus</keyword>
<keyword id="KW-1185">Reference proteome</keyword>
<proteinExistence type="evidence at transcript level"/>
<accession>Q4QSC8</accession>
<accession>A0A1D6HVU1</accession>